<name>ISPE_PELPD</name>
<keyword id="KW-0067">ATP-binding</keyword>
<keyword id="KW-0414">Isoprene biosynthesis</keyword>
<keyword id="KW-0418">Kinase</keyword>
<keyword id="KW-0547">Nucleotide-binding</keyword>
<keyword id="KW-1185">Reference proteome</keyword>
<keyword id="KW-0808">Transferase</keyword>
<feature type="chain" id="PRO_1000007868" description="4-diphosphocytidyl-2-C-methyl-D-erythritol kinase">
    <location>
        <begin position="1"/>
        <end position="280"/>
    </location>
</feature>
<feature type="active site" evidence="1">
    <location>
        <position position="11"/>
    </location>
</feature>
<feature type="active site" evidence="1">
    <location>
        <position position="137"/>
    </location>
</feature>
<feature type="binding site" evidence="1">
    <location>
        <begin position="95"/>
        <end position="105"/>
    </location>
    <ligand>
        <name>ATP</name>
        <dbReference type="ChEBI" id="CHEBI:30616"/>
    </ligand>
</feature>
<gene>
    <name evidence="1" type="primary">ispE</name>
    <name type="ordered locus">Ppro_0738</name>
</gene>
<organism>
    <name type="scientific">Pelobacter propionicus (strain DSM 2379 / NBRC 103807 / OttBd1)</name>
    <dbReference type="NCBI Taxonomy" id="338966"/>
    <lineage>
        <taxon>Bacteria</taxon>
        <taxon>Pseudomonadati</taxon>
        <taxon>Thermodesulfobacteriota</taxon>
        <taxon>Desulfuromonadia</taxon>
        <taxon>Desulfuromonadales</taxon>
        <taxon>Desulfuromonadaceae</taxon>
        <taxon>Pelobacter</taxon>
    </lineage>
</organism>
<comment type="function">
    <text evidence="1">Catalyzes the phosphorylation of the position 2 hydroxy group of 4-diphosphocytidyl-2C-methyl-D-erythritol.</text>
</comment>
<comment type="catalytic activity">
    <reaction evidence="1">
        <text>4-CDP-2-C-methyl-D-erythritol + ATP = 4-CDP-2-C-methyl-D-erythritol 2-phosphate + ADP + H(+)</text>
        <dbReference type="Rhea" id="RHEA:18437"/>
        <dbReference type="ChEBI" id="CHEBI:15378"/>
        <dbReference type="ChEBI" id="CHEBI:30616"/>
        <dbReference type="ChEBI" id="CHEBI:57823"/>
        <dbReference type="ChEBI" id="CHEBI:57919"/>
        <dbReference type="ChEBI" id="CHEBI:456216"/>
        <dbReference type="EC" id="2.7.1.148"/>
    </reaction>
</comment>
<comment type="pathway">
    <text evidence="1">Isoprenoid biosynthesis; isopentenyl diphosphate biosynthesis via DXP pathway; isopentenyl diphosphate from 1-deoxy-D-xylulose 5-phosphate: step 3/6.</text>
</comment>
<comment type="similarity">
    <text evidence="1">Belongs to the GHMP kinase family. IspE subfamily.</text>
</comment>
<evidence type="ECO:0000255" key="1">
    <source>
        <dbReference type="HAMAP-Rule" id="MF_00061"/>
    </source>
</evidence>
<reference key="1">
    <citation type="submission" date="2006-10" db="EMBL/GenBank/DDBJ databases">
        <title>Complete sequence of chromosome of Pelobacter propionicus DSM 2379.</title>
        <authorList>
            <consortium name="US DOE Joint Genome Institute"/>
            <person name="Copeland A."/>
            <person name="Lucas S."/>
            <person name="Lapidus A."/>
            <person name="Barry K."/>
            <person name="Detter J.C."/>
            <person name="Glavina del Rio T."/>
            <person name="Hammon N."/>
            <person name="Israni S."/>
            <person name="Dalin E."/>
            <person name="Tice H."/>
            <person name="Pitluck S."/>
            <person name="Saunders E."/>
            <person name="Brettin T."/>
            <person name="Bruce D."/>
            <person name="Han C."/>
            <person name="Tapia R."/>
            <person name="Schmutz J."/>
            <person name="Larimer F."/>
            <person name="Land M."/>
            <person name="Hauser L."/>
            <person name="Kyrpides N."/>
            <person name="Kim E."/>
            <person name="Lovley D."/>
            <person name="Richardson P."/>
        </authorList>
    </citation>
    <scope>NUCLEOTIDE SEQUENCE [LARGE SCALE GENOMIC DNA]</scope>
    <source>
        <strain>DSM 2379 / NBRC 103807 / OttBd1</strain>
    </source>
</reference>
<proteinExistence type="inferred from homology"/>
<dbReference type="EC" id="2.7.1.148" evidence="1"/>
<dbReference type="EMBL" id="CP000482">
    <property type="protein sequence ID" value="ABK98369.1"/>
    <property type="molecule type" value="Genomic_DNA"/>
</dbReference>
<dbReference type="RefSeq" id="WP_011734681.1">
    <property type="nucleotide sequence ID" value="NC_008609.1"/>
</dbReference>
<dbReference type="SMR" id="A1ALZ9"/>
<dbReference type="STRING" id="338966.Ppro_0738"/>
<dbReference type="KEGG" id="ppd:Ppro_0738"/>
<dbReference type="eggNOG" id="COG1947">
    <property type="taxonomic scope" value="Bacteria"/>
</dbReference>
<dbReference type="HOGENOM" id="CLU_053057_1_1_7"/>
<dbReference type="OrthoDB" id="9809438at2"/>
<dbReference type="UniPathway" id="UPA00056">
    <property type="reaction ID" value="UER00094"/>
</dbReference>
<dbReference type="Proteomes" id="UP000006732">
    <property type="component" value="Chromosome"/>
</dbReference>
<dbReference type="GO" id="GO:0050515">
    <property type="term" value="F:4-(cytidine 5'-diphospho)-2-C-methyl-D-erythritol kinase activity"/>
    <property type="evidence" value="ECO:0007669"/>
    <property type="project" value="UniProtKB-UniRule"/>
</dbReference>
<dbReference type="GO" id="GO:0005524">
    <property type="term" value="F:ATP binding"/>
    <property type="evidence" value="ECO:0007669"/>
    <property type="project" value="UniProtKB-UniRule"/>
</dbReference>
<dbReference type="GO" id="GO:0019288">
    <property type="term" value="P:isopentenyl diphosphate biosynthetic process, methylerythritol 4-phosphate pathway"/>
    <property type="evidence" value="ECO:0007669"/>
    <property type="project" value="UniProtKB-UniRule"/>
</dbReference>
<dbReference type="GO" id="GO:0016114">
    <property type="term" value="P:terpenoid biosynthetic process"/>
    <property type="evidence" value="ECO:0007669"/>
    <property type="project" value="InterPro"/>
</dbReference>
<dbReference type="Gene3D" id="3.30.230.10">
    <property type="match status" value="1"/>
</dbReference>
<dbReference type="Gene3D" id="3.30.70.890">
    <property type="entry name" value="GHMP kinase, C-terminal domain"/>
    <property type="match status" value="1"/>
</dbReference>
<dbReference type="HAMAP" id="MF_00061">
    <property type="entry name" value="IspE"/>
    <property type="match status" value="1"/>
</dbReference>
<dbReference type="InterPro" id="IPR013750">
    <property type="entry name" value="GHMP_kinase_C_dom"/>
</dbReference>
<dbReference type="InterPro" id="IPR036554">
    <property type="entry name" value="GHMP_kinase_C_sf"/>
</dbReference>
<dbReference type="InterPro" id="IPR006204">
    <property type="entry name" value="GHMP_kinase_N_dom"/>
</dbReference>
<dbReference type="InterPro" id="IPR004424">
    <property type="entry name" value="IspE"/>
</dbReference>
<dbReference type="InterPro" id="IPR020568">
    <property type="entry name" value="Ribosomal_Su5_D2-typ_SF"/>
</dbReference>
<dbReference type="InterPro" id="IPR014721">
    <property type="entry name" value="Ribsml_uS5_D2-typ_fold_subgr"/>
</dbReference>
<dbReference type="NCBIfam" id="TIGR00154">
    <property type="entry name" value="ispE"/>
    <property type="match status" value="1"/>
</dbReference>
<dbReference type="NCBIfam" id="NF011202">
    <property type="entry name" value="PRK14608.1"/>
    <property type="match status" value="1"/>
</dbReference>
<dbReference type="PANTHER" id="PTHR43527">
    <property type="entry name" value="4-DIPHOSPHOCYTIDYL-2-C-METHYL-D-ERYTHRITOL KINASE, CHLOROPLASTIC"/>
    <property type="match status" value="1"/>
</dbReference>
<dbReference type="PANTHER" id="PTHR43527:SF2">
    <property type="entry name" value="4-DIPHOSPHOCYTIDYL-2-C-METHYL-D-ERYTHRITOL KINASE, CHLOROPLASTIC"/>
    <property type="match status" value="1"/>
</dbReference>
<dbReference type="Pfam" id="PF08544">
    <property type="entry name" value="GHMP_kinases_C"/>
    <property type="match status" value="1"/>
</dbReference>
<dbReference type="Pfam" id="PF00288">
    <property type="entry name" value="GHMP_kinases_N"/>
    <property type="match status" value="1"/>
</dbReference>
<dbReference type="PIRSF" id="PIRSF010376">
    <property type="entry name" value="IspE"/>
    <property type="match status" value="1"/>
</dbReference>
<dbReference type="SUPFAM" id="SSF55060">
    <property type="entry name" value="GHMP Kinase, C-terminal domain"/>
    <property type="match status" value="1"/>
</dbReference>
<dbReference type="SUPFAM" id="SSF54211">
    <property type="entry name" value="Ribosomal protein S5 domain 2-like"/>
    <property type="match status" value="1"/>
</dbReference>
<protein>
    <recommendedName>
        <fullName evidence="1">4-diphosphocytidyl-2-C-methyl-D-erythritol kinase</fullName>
        <shortName evidence="1">CMK</shortName>
        <ecNumber evidence="1">2.7.1.148</ecNumber>
    </recommendedName>
    <alternativeName>
        <fullName evidence="1">4-(cytidine-5'-diphospho)-2-C-methyl-D-erythritol kinase</fullName>
    </alternativeName>
</protein>
<sequence length="280" mass="29698">MKSLTLKAPAKVNYLLDVIRRRPDGYHDLRMVMQRVNLCDEIAIALTDSPELSVCCGKDGVPDGPGNIAWKAARAMLDLAAGGQGATISIVKNIPVAAGLGGGSSDAATVLMGMNQLLELGLTDQELMRIGVKLGADVPFFIFKKTALAEGIGEQLRAMPPMPALWVLLVNPGVHVSTAWVYKNLRLTSRGELAKLPQFFSTVEDVCSMLSNDLESVTIPAFPVIADIKRAMLAKGALGAMMSGSGPTVFGLFRDREGAEAARAELVEGSGWFAAVAETL</sequence>
<accession>A1ALZ9</accession>